<accession>P22082</accession>
<accession>D6W2Y8</accession>
<protein>
    <recommendedName>
        <fullName>Transcription regulatory protein SNF2</fullName>
        <ecNumber>3.6.4.-</ecNumber>
    </recommendedName>
    <alternativeName>
        <fullName>ATP-dependent helicase SNF2</fullName>
    </alternativeName>
    <alternativeName>
        <fullName>Regulatory protein GAM1</fullName>
    </alternativeName>
    <alternativeName>
        <fullName>Regulatory protein SWI2</fullName>
    </alternativeName>
    <alternativeName>
        <fullName>SWI/SNF complex component SNF2</fullName>
    </alternativeName>
    <alternativeName>
        <fullName>Transcription factor TYE3</fullName>
    </alternativeName>
</protein>
<sequence>MNIPQRQFSNEEVNRCYLRWQHLRNEHGMNAPSVPEFIYLTKVLQFAAKQRQELQMQRQQQGISGSQQNIVPNSSDQAELPNNASSHISASASPHLAPNMQLNGNETFSTSAHQSPIMQTQMPLNSNGGNNMLPQRQSSVGSLNATNFSPTPANNGENAAEKPDNSNHNNLNLNNSELQPQNRSLQEHNIQDSNVMPGSQINSPMPQQAQMQQAQFQAQQAQQAQQAQQAQQAQARLQQGRRLPMTMFTAEQSELLKAQITSLKCLVNRKPIPFEFQAVIQKSINHPPDFKRMLLSLSEFARRRQPTDQNNQSNLNGGNNTQQPGTNSHYNNTNTDNVSGLTRNAPLDSKDENFASVSPAGPSSVHNAKNGTLDKNSQTVSGTPITQTESKKEENETISNVAKTAPNSNKTHTEQNNPPKPQKPVPLNVLQDQYKEGIKVVDIDDPDMMVDSFTMPNISHSNIDYQTLLANSDHAKFTIEPGVLPVGIDTHTATDIYQTLIALNLDTTVNDCLDKLLNDECTESTRENALYDYYALQLLPLQKAVRGHVLQFEWHQNSLLTNTHPNFLSKIRNINVQDALLTNQLYKNHELLKLERKKTEAVARLKSMNKSAINQYNRRQDKKNKRLKFGHRLIATHTNLERDEQKRAEKKAKERLQALKANDEEAYIKLLDQTKDTRITHLLRQTNAFLDSLTRAVKDQQKYTKEMIDSHIKEASEEVDDLSMVPKMKDEEYDDDDDNSNVDYYNVAHRIKEDIKKQPSILVGGTLKDYQIKGLQWMVSLFNNHLNGILADEMGLGKTIQTISLLTYLYEMKNIRGPYLVIVPLSTLSNWSSEFAKWAPTLRTISFKGSPNERKAKQAKIRAGEFDVVLTTFEYIIKERALLSKVKWVHMIIDEGHRMKNAQSKLSLTLNTHYHADYRLILTGTPLQNNLPELWALLNFVLPKIFNSVKSFDEWFNTPFANTGGQDKIELSEEETLLVIRRLHKVLRPFLLRRLKKDVEKELPDKVEKVVKCKMSALQQIMYQQMLKYRRLFIGDQNNKKMVGLRGFNNQIMQLKKICNHPFVFEEVEDQINPTRETNDDIWRVAGKFELLDRILPKLKATGHRVLIFFQMTQIMDIMEDFLRYINIKYLRLDGHTKSDERSELLRLFNAPDSEYLCFILSTRAGGLGLNLQTADTVIIFDTDWNPHQDLQAQDRAHRIGQKNEVRILRLITTNSVEEVILERAYKKLDIDGKVIQAGKFDNKSTSEEQEALLRSLLDAEEERRKKRESGVEEEEELKDSEINEILARNDEEMAVLTRMDEDRSKKEEELGVKSRLLEKSELPDIYSRDIGAELKREESESAAVYNGRGARERKTATYNDNMSEEQWLRQFEVSDDEKNDKQARKQRTKKEDKSEAIDGNGEIKGENIDADNDGPRINNISAEDRADTDLAMNDDDFLSKKRKAGRPRGRPKKVKLEGSENSEPPALESSPVTGDNSPSEDFMDIPKPRTAGKTSVKSARTSTRGRGRGRGRGRGRGRGRGRPPKARNGLDYVRTPAAATSPIDIREKVAKQALDLYHFALNYENEAGRKLSDIFLSKPSKALYPDYYMIIKYPVAFDNINTHIETLAYNSLKETLQDFHLIFSNARIYNTEGSVVYEDSLELEKVVTKKYCEIMGDNSQLDFTEFDEQYGTRPLVLPPVVTSSVAESFTDEADSSMTEASV</sequence>
<gene>
    <name type="primary">SNF2</name>
    <name type="synonym">GAM1</name>
    <name type="synonym">RIC1</name>
    <name type="synonym">SWI2</name>
    <name type="synonym">TYE3</name>
    <name type="ordered locus">YOR290C</name>
</gene>
<comment type="function">
    <text>Involved in transcriptional activation. Catalytic component of the SWI/SNF complex, an ATP-dependent chromatin-remodeling complex, which is required for the positive and negative regulation of gene expression of a large number of genes. It changes chromatin structure by altering DNA-histone contacts within a nucleosome, leading eventually to a change in nucleosome position, thus facilitating or repressing binding of gene-specific transcription factors.</text>
</comment>
<comment type="subunit">
    <text>Component of the SWI/SNF global transcription activator complex. The 1.14 MDa SWI/SNF complex is composed of 11 different subunits: one copy each of SWI1, SNF2/SWI2, SNF5, SNF12/SWP73, ARP7/SWP61, ARP9/SWP59; two copies each of SWI3, SNF6, SNF11, SWP82; and three copies of TAF14/SWP29.</text>
</comment>
<comment type="interaction">
    <interactant intactId="EBI-17526">
        <id>P22082</id>
    </interactant>
    <interactant intactId="EBI-8113">
        <id>P02309</id>
        <label>HHF2</label>
    </interactant>
    <organismsDiffer>false</organismsDiffer>
    <experiments>2</experiments>
</comment>
<comment type="interaction">
    <interactant intactId="EBI-17526">
        <id>P22082</id>
    </interactant>
    <interactant intactId="EBI-8394">
        <id>P38074</id>
        <label>HMT1</label>
    </interactant>
    <organismsDiffer>false</organismsDiffer>
    <experiments>3</experiments>
</comment>
<comment type="interaction">
    <interactant intactId="EBI-17526">
        <id>P22082</id>
    </interactant>
    <interactant intactId="EBI-17560">
        <id>P38956</id>
        <label>SNF11</label>
    </interactant>
    <organismsDiffer>false</organismsDiffer>
    <experiments>3</experiments>
</comment>
<comment type="interaction">
    <interactant intactId="EBI-17526">
        <id>P22082</id>
    </interactant>
    <interactant intactId="EBI-18622">
        <id>P32591</id>
        <label>SWI3</label>
    </interactant>
    <organismsDiffer>false</organismsDiffer>
    <experiments>10</experiments>
</comment>
<comment type="subcellular location">
    <subcellularLocation>
        <location>Nucleus</location>
    </subcellularLocation>
</comment>
<comment type="miscellaneous">
    <text evidence="7">Present with 217 molecules/cell in log phase SD medium.</text>
</comment>
<proteinExistence type="evidence at protein level"/>
<evidence type="ECO:0000255" key="1">
    <source>
        <dbReference type="PROSITE-ProRule" id="PRU00035"/>
    </source>
</evidence>
<evidence type="ECO:0000255" key="2">
    <source>
        <dbReference type="PROSITE-ProRule" id="PRU00541"/>
    </source>
</evidence>
<evidence type="ECO:0000255" key="3">
    <source>
        <dbReference type="PROSITE-ProRule" id="PRU00542"/>
    </source>
</evidence>
<evidence type="ECO:0000255" key="4">
    <source>
        <dbReference type="PROSITE-ProRule" id="PRU00549"/>
    </source>
</evidence>
<evidence type="ECO:0000255" key="5">
    <source>
        <dbReference type="PROSITE-ProRule" id="PRU01001"/>
    </source>
</evidence>
<evidence type="ECO:0000256" key="6">
    <source>
        <dbReference type="SAM" id="MobiDB-lite"/>
    </source>
</evidence>
<evidence type="ECO:0000269" key="7">
    <source>
    </source>
</evidence>
<evidence type="ECO:0007744" key="8">
    <source>
    </source>
</evidence>
<evidence type="ECO:0007744" key="9">
    <source>
    </source>
</evidence>
<evidence type="ECO:0007744" key="10">
    <source>
    </source>
</evidence>
<evidence type="ECO:0007744" key="11">
    <source>
    </source>
</evidence>
<evidence type="ECO:0007829" key="12">
    <source>
        <dbReference type="PDB" id="4I6M"/>
    </source>
</evidence>
<evidence type="ECO:0007829" key="13">
    <source>
        <dbReference type="PDB" id="6IY2"/>
    </source>
</evidence>
<evidence type="ECO:0007829" key="14">
    <source>
        <dbReference type="PDB" id="7C4J"/>
    </source>
</evidence>
<evidence type="ECO:0007829" key="15">
    <source>
        <dbReference type="PDB" id="7VRC"/>
    </source>
</evidence>
<name>SNF2_YEAST</name>
<feature type="chain" id="PRO_0000074358" description="Transcription regulatory protein SNF2">
    <location>
        <begin position="1"/>
        <end position="1703"/>
    </location>
</feature>
<feature type="domain" description="QLQ" evidence="5">
    <location>
        <begin position="247"/>
        <end position="282"/>
    </location>
</feature>
<feature type="domain" description="HSA" evidence="4">
    <location>
        <begin position="588"/>
        <end position="661"/>
    </location>
</feature>
<feature type="domain" description="Helicase ATP-binding" evidence="2">
    <location>
        <begin position="779"/>
        <end position="944"/>
    </location>
</feature>
<feature type="domain" description="Helicase C-terminal" evidence="3">
    <location>
        <begin position="1091"/>
        <end position="1254"/>
    </location>
</feature>
<feature type="domain" description="Bromo" evidence="1">
    <location>
        <begin position="1542"/>
        <end position="1655"/>
    </location>
</feature>
<feature type="DNA-binding region" description="A.T hook 1">
    <location>
        <begin position="1446"/>
        <end position="1456"/>
    </location>
</feature>
<feature type="DNA-binding region" description="A.T hook 2">
    <location>
        <begin position="1502"/>
        <end position="1513"/>
    </location>
</feature>
<feature type="DNA-binding region" description="A.T hook 3">
    <location>
        <begin position="1516"/>
        <end position="1526"/>
    </location>
</feature>
<feature type="region of interest" description="Disordered" evidence="6">
    <location>
        <begin position="57"/>
        <end position="176"/>
    </location>
</feature>
<feature type="region of interest" description="Disordered" evidence="6">
    <location>
        <begin position="193"/>
        <end position="212"/>
    </location>
</feature>
<feature type="region of interest" description="Disordered" evidence="6">
    <location>
        <begin position="305"/>
        <end position="426"/>
    </location>
</feature>
<feature type="region of interest" description="Disordered" evidence="6">
    <location>
        <begin position="1338"/>
        <end position="1531"/>
    </location>
</feature>
<feature type="short sequence motif" description="DEGH box">
    <location>
        <begin position="894"/>
        <end position="897"/>
    </location>
</feature>
<feature type="compositionally biased region" description="Low complexity" evidence="6">
    <location>
        <begin position="57"/>
        <end position="68"/>
    </location>
</feature>
<feature type="compositionally biased region" description="Polar residues" evidence="6">
    <location>
        <begin position="69"/>
        <end position="83"/>
    </location>
</feature>
<feature type="compositionally biased region" description="Low complexity" evidence="6">
    <location>
        <begin position="84"/>
        <end position="98"/>
    </location>
</feature>
<feature type="compositionally biased region" description="Polar residues" evidence="6">
    <location>
        <begin position="100"/>
        <end position="157"/>
    </location>
</feature>
<feature type="compositionally biased region" description="Low complexity" evidence="6">
    <location>
        <begin position="166"/>
        <end position="176"/>
    </location>
</feature>
<feature type="compositionally biased region" description="Polar residues" evidence="6">
    <location>
        <begin position="193"/>
        <end position="206"/>
    </location>
</feature>
<feature type="compositionally biased region" description="Low complexity" evidence="6">
    <location>
        <begin position="309"/>
        <end position="327"/>
    </location>
</feature>
<feature type="compositionally biased region" description="Polar residues" evidence="6">
    <location>
        <begin position="328"/>
        <end position="342"/>
    </location>
</feature>
<feature type="compositionally biased region" description="Polar residues" evidence="6">
    <location>
        <begin position="364"/>
        <end position="388"/>
    </location>
</feature>
<feature type="compositionally biased region" description="Polar residues" evidence="6">
    <location>
        <begin position="397"/>
        <end position="410"/>
    </location>
</feature>
<feature type="compositionally biased region" description="Basic and acidic residues" evidence="6">
    <location>
        <begin position="1377"/>
        <end position="1408"/>
    </location>
</feature>
<feature type="compositionally biased region" description="Basic residues" evidence="6">
    <location>
        <begin position="1441"/>
        <end position="1454"/>
    </location>
</feature>
<feature type="compositionally biased region" description="Polar residues" evidence="6">
    <location>
        <begin position="1471"/>
        <end position="1480"/>
    </location>
</feature>
<feature type="compositionally biased region" description="Polar residues" evidence="6">
    <location>
        <begin position="1493"/>
        <end position="1503"/>
    </location>
</feature>
<feature type="compositionally biased region" description="Basic residues" evidence="6">
    <location>
        <begin position="1504"/>
        <end position="1526"/>
    </location>
</feature>
<feature type="binding site" evidence="2">
    <location>
        <begin position="792"/>
        <end position="799"/>
    </location>
    <ligand>
        <name>ATP</name>
        <dbReference type="ChEBI" id="CHEBI:30616"/>
    </ligand>
</feature>
<feature type="modified residue" description="Phosphoserine" evidence="8 9 10">
    <location>
        <position position="358"/>
    </location>
</feature>
<feature type="modified residue" description="Phosphothreonine" evidence="10">
    <location>
        <position position="383"/>
    </location>
</feature>
<feature type="modified residue" description="Phosphoserine" evidence="9 10">
    <location>
        <position position="716"/>
    </location>
</feature>
<feature type="modified residue" description="Phosphoserine" evidence="9">
    <location>
        <position position="1340"/>
    </location>
</feature>
<feature type="cross-link" description="Glycyl lysine isopeptide (Lys-Gly) (interchain with G-Cter in ubiquitin)" evidence="11">
    <location>
        <position position="543"/>
    </location>
</feature>
<feature type="helix" evidence="15">
    <location>
        <begin position="250"/>
        <end position="267"/>
    </location>
</feature>
<feature type="helix" evidence="15">
    <location>
        <begin position="274"/>
        <end position="285"/>
    </location>
</feature>
<feature type="helix" evidence="15">
    <location>
        <begin position="290"/>
        <end position="295"/>
    </location>
</feature>
<feature type="helix" evidence="14">
    <location>
        <begin position="427"/>
        <end position="434"/>
    </location>
</feature>
<feature type="strand" evidence="14">
    <location>
        <begin position="439"/>
        <end position="441"/>
    </location>
</feature>
<feature type="strand" evidence="14">
    <location>
        <begin position="451"/>
        <end position="453"/>
    </location>
</feature>
<feature type="helix" evidence="14">
    <location>
        <begin position="465"/>
        <end position="471"/>
    </location>
</feature>
<feature type="turn" evidence="14">
    <location>
        <begin position="474"/>
        <end position="476"/>
    </location>
</feature>
<feature type="turn" evidence="14">
    <location>
        <begin position="481"/>
        <end position="483"/>
    </location>
</feature>
<feature type="helix" evidence="14">
    <location>
        <begin position="490"/>
        <end position="517"/>
    </location>
</feature>
<feature type="helix" evidence="14">
    <location>
        <begin position="523"/>
        <end position="556"/>
    </location>
</feature>
<feature type="helix" evidence="14">
    <location>
        <begin position="560"/>
        <end position="563"/>
    </location>
</feature>
<feature type="helix" evidence="12">
    <location>
        <begin position="593"/>
        <end position="657"/>
    </location>
</feature>
<feature type="helix" evidence="13">
    <location>
        <begin position="672"/>
        <end position="681"/>
    </location>
</feature>
<feature type="helix" evidence="13">
    <location>
        <begin position="685"/>
        <end position="688"/>
    </location>
</feature>
<feature type="helix" evidence="13">
    <location>
        <begin position="744"/>
        <end position="747"/>
    </location>
</feature>
<feature type="helix" evidence="13">
    <location>
        <begin position="769"/>
        <end position="783"/>
    </location>
</feature>
<feature type="helix" evidence="13">
    <location>
        <begin position="798"/>
        <end position="811"/>
    </location>
</feature>
<feature type="strand" evidence="13">
    <location>
        <begin position="819"/>
        <end position="822"/>
    </location>
</feature>
<feature type="helix" evidence="13">
    <location>
        <begin position="825"/>
        <end position="827"/>
    </location>
</feature>
<feature type="helix" evidence="13">
    <location>
        <begin position="828"/>
        <end position="838"/>
    </location>
</feature>
<feature type="helix" evidence="13">
    <location>
        <begin position="851"/>
        <end position="861"/>
    </location>
</feature>
<feature type="turn" evidence="13">
    <location>
        <begin position="862"/>
        <end position="864"/>
    </location>
</feature>
<feature type="strand" evidence="13">
    <location>
        <begin position="867"/>
        <end position="869"/>
    </location>
</feature>
<feature type="helix" evidence="13">
    <location>
        <begin position="874"/>
        <end position="878"/>
    </location>
</feature>
<feature type="turn" evidence="13">
    <location>
        <begin position="879"/>
        <end position="881"/>
    </location>
</feature>
<feature type="helix" evidence="13">
    <location>
        <begin position="882"/>
        <end position="885"/>
    </location>
</feature>
<feature type="strand" evidence="13">
    <location>
        <begin position="890"/>
        <end position="893"/>
    </location>
</feature>
<feature type="helix" evidence="13">
    <location>
        <begin position="896"/>
        <end position="899"/>
    </location>
</feature>
<feature type="helix" evidence="13">
    <location>
        <begin position="905"/>
        <end position="911"/>
    </location>
</feature>
<feature type="strand" evidence="13">
    <location>
        <begin position="917"/>
        <end position="922"/>
    </location>
</feature>
<feature type="strand" evidence="13">
    <location>
        <begin position="929"/>
        <end position="933"/>
    </location>
</feature>
<feature type="helix" evidence="13">
    <location>
        <begin position="934"/>
        <end position="937"/>
    </location>
</feature>
<feature type="turn" evidence="13">
    <location>
        <begin position="938"/>
        <end position="940"/>
    </location>
</feature>
<feature type="helix" evidence="13">
    <location>
        <begin position="944"/>
        <end position="947"/>
    </location>
</feature>
<feature type="turn" evidence="13">
    <location>
        <begin position="948"/>
        <end position="952"/>
    </location>
</feature>
<feature type="helix" evidence="13">
    <location>
        <begin position="953"/>
        <end position="956"/>
    </location>
</feature>
<feature type="turn" evidence="13">
    <location>
        <begin position="957"/>
        <end position="959"/>
    </location>
</feature>
<feature type="helix" evidence="13">
    <location>
        <begin position="970"/>
        <end position="974"/>
    </location>
</feature>
<feature type="helix" evidence="13">
    <location>
        <begin position="977"/>
        <end position="986"/>
    </location>
</feature>
<feature type="turn" evidence="13">
    <location>
        <begin position="996"/>
        <end position="1000"/>
    </location>
</feature>
<feature type="strand" evidence="13">
    <location>
        <begin position="1007"/>
        <end position="1013"/>
    </location>
</feature>
<feature type="turn" evidence="13">
    <location>
        <begin position="1017"/>
        <end position="1020"/>
    </location>
</feature>
<feature type="helix" evidence="13">
    <location>
        <begin position="1021"/>
        <end position="1030"/>
    </location>
</feature>
<feature type="helix" evidence="13">
    <location>
        <begin position="1051"/>
        <end position="1060"/>
    </location>
</feature>
<feature type="strand" evidence="13">
    <location>
        <begin position="1064"/>
        <end position="1066"/>
    </location>
</feature>
<feature type="helix" evidence="13">
    <location>
        <begin position="1069"/>
        <end position="1072"/>
    </location>
</feature>
<feature type="turn" evidence="13">
    <location>
        <begin position="1080"/>
        <end position="1082"/>
    </location>
</feature>
<feature type="helix" evidence="13">
    <location>
        <begin position="1087"/>
        <end position="1102"/>
    </location>
</feature>
<feature type="strand" evidence="13">
    <location>
        <begin position="1106"/>
        <end position="1109"/>
    </location>
</feature>
<feature type="helix" evidence="13">
    <location>
        <begin position="1113"/>
        <end position="1125"/>
    </location>
</feature>
<feature type="strand" evidence="13">
    <location>
        <begin position="1130"/>
        <end position="1132"/>
    </location>
</feature>
<feature type="helix" evidence="13">
    <location>
        <begin position="1140"/>
        <end position="1149"/>
    </location>
</feature>
<feature type="strand" evidence="13">
    <location>
        <begin position="1158"/>
        <end position="1160"/>
    </location>
</feature>
<feature type="strand" evidence="13">
    <location>
        <begin position="1177"/>
        <end position="1182"/>
    </location>
</feature>
<feature type="strand" evidence="13">
    <location>
        <begin position="1185"/>
        <end position="1187"/>
    </location>
</feature>
<feature type="helix" evidence="13">
    <location>
        <begin position="1188"/>
        <end position="1197"/>
    </location>
</feature>
<feature type="strand" evidence="13">
    <location>
        <begin position="1207"/>
        <end position="1213"/>
    </location>
</feature>
<feature type="helix" evidence="13">
    <location>
        <begin position="1217"/>
        <end position="1228"/>
    </location>
</feature>
<feature type="helix" evidence="13">
    <location>
        <begin position="1233"/>
        <end position="1238"/>
    </location>
</feature>
<feature type="helix" evidence="13">
    <location>
        <begin position="1240"/>
        <end position="1242"/>
    </location>
</feature>
<feature type="turn" evidence="13">
    <location>
        <begin position="1247"/>
        <end position="1251"/>
    </location>
</feature>
<feature type="helix" evidence="13">
    <location>
        <begin position="1252"/>
        <end position="1258"/>
    </location>
</feature>
<feature type="turn" evidence="13">
    <location>
        <begin position="1259"/>
        <end position="1262"/>
    </location>
</feature>
<feature type="helix" evidence="13">
    <location>
        <begin position="1264"/>
        <end position="1268"/>
    </location>
</feature>
<feature type="helix" evidence="13">
    <location>
        <begin position="1280"/>
        <end position="1286"/>
    </location>
</feature>
<feature type="helix" evidence="13">
    <location>
        <begin position="1291"/>
        <end position="1306"/>
    </location>
</feature>
<feature type="helix" evidence="13">
    <location>
        <begin position="1338"/>
        <end position="1345"/>
    </location>
</feature>
<reference key="1">
    <citation type="journal article" date="1991" name="Proc. Natl. Acad. Sci. U.S.A.">
        <title>Functional interdependence of the yeast SNF2, SNF5, and SNF6 proteins in transcriptional activation.</title>
        <authorList>
            <person name="Laurent B.C."/>
            <person name="Treitel M.A."/>
            <person name="Carlson M."/>
        </authorList>
    </citation>
    <scope>NUCLEOTIDE SEQUENCE [GENOMIC DNA]</scope>
    <source>
        <strain>ATCC 204508 / S288c</strain>
    </source>
</reference>
<reference key="2">
    <citation type="journal article" date="1991" name="Mol. Gen. Genet.">
        <title>The GAM1/SNF2 gene of Saccharomyces cerevisiae encodes a highly charged nuclear protein required for transcription of the STA1 gene.</title>
        <authorList>
            <person name="Yoshimoto H."/>
            <person name="Yamashita I."/>
        </authorList>
    </citation>
    <scope>NUCLEOTIDE SEQUENCE [GENOMIC DNA]</scope>
    <source>
        <strain>ATCC 38626 / AH22 / NRRL Y-12843</strain>
    </source>
</reference>
<reference key="3">
    <citation type="journal article" date="1995" name="J. Biochem.">
        <title>The SNF2/SWI2/GAM1/TYE3/RIC1 gene is involved in the coordinate regulation of phospholipid synthesis in Saccharomyces cerevisiae.</title>
        <authorList>
            <person name="Kodaki T."/>
            <person name="Hosaka K."/>
            <person name="Nikawa J."/>
            <person name="Yamashita S."/>
        </authorList>
    </citation>
    <scope>NUCLEOTIDE SEQUENCE [GENOMIC DNA]</scope>
    <source>
        <strain>ATCC 26787 / X2180-1B</strain>
    </source>
</reference>
<reference key="4">
    <citation type="journal article" date="1996" name="Yeast">
        <title>DNA sequence analysis of the VPH1-SNF2 region on chromosome XV of Saccharomyces cerevisiae.</title>
        <authorList>
            <person name="Cheret G."/>
            <person name="Bernardi A."/>
            <person name="Sor F.J."/>
        </authorList>
    </citation>
    <scope>NUCLEOTIDE SEQUENCE [GENOMIC DNA]</scope>
    <source>
        <strain>ATCC 204508 / S288c</strain>
    </source>
</reference>
<reference key="5">
    <citation type="journal article" date="1997" name="Nature">
        <title>The nucleotide sequence of Saccharomyces cerevisiae chromosome XV.</title>
        <authorList>
            <person name="Dujon B."/>
            <person name="Albermann K."/>
            <person name="Aldea M."/>
            <person name="Alexandraki D."/>
            <person name="Ansorge W."/>
            <person name="Arino J."/>
            <person name="Benes V."/>
            <person name="Bohn C."/>
            <person name="Bolotin-Fukuhara M."/>
            <person name="Bordonne R."/>
            <person name="Boyer J."/>
            <person name="Camasses A."/>
            <person name="Casamayor A."/>
            <person name="Casas C."/>
            <person name="Cheret G."/>
            <person name="Cziepluch C."/>
            <person name="Daignan-Fornier B."/>
            <person name="Dang V.-D."/>
            <person name="de Haan M."/>
            <person name="Delius H."/>
            <person name="Durand P."/>
            <person name="Fairhead C."/>
            <person name="Feldmann H."/>
            <person name="Gaillon L."/>
            <person name="Galisson F."/>
            <person name="Gamo F.-J."/>
            <person name="Gancedo C."/>
            <person name="Goffeau A."/>
            <person name="Goulding S.E."/>
            <person name="Grivell L.A."/>
            <person name="Habbig B."/>
            <person name="Hand N.J."/>
            <person name="Hani J."/>
            <person name="Hattenhorst U."/>
            <person name="Hebling U."/>
            <person name="Hernando Y."/>
            <person name="Herrero E."/>
            <person name="Heumann K."/>
            <person name="Hiesel R."/>
            <person name="Hilger F."/>
            <person name="Hofmann B."/>
            <person name="Hollenberg C.P."/>
            <person name="Hughes B."/>
            <person name="Jauniaux J.-C."/>
            <person name="Kalogeropoulos A."/>
            <person name="Katsoulou C."/>
            <person name="Kordes E."/>
            <person name="Lafuente M.J."/>
            <person name="Landt O."/>
            <person name="Louis E.J."/>
            <person name="Maarse A.C."/>
            <person name="Madania A."/>
            <person name="Mannhaupt G."/>
            <person name="Marck C."/>
            <person name="Martin R.P."/>
            <person name="Mewes H.-W."/>
            <person name="Michaux G."/>
            <person name="Paces V."/>
            <person name="Parle-McDermott A.G."/>
            <person name="Pearson B.M."/>
            <person name="Perrin A."/>
            <person name="Pettersson B."/>
            <person name="Poch O."/>
            <person name="Pohl T.M."/>
            <person name="Poirey R."/>
            <person name="Portetelle D."/>
            <person name="Pujol A."/>
            <person name="Purnelle B."/>
            <person name="Ramezani Rad M."/>
            <person name="Rechmann S."/>
            <person name="Schwager C."/>
            <person name="Schweizer M."/>
            <person name="Sor F."/>
            <person name="Sterky F."/>
            <person name="Tarassov I.A."/>
            <person name="Teodoru C."/>
            <person name="Tettelin H."/>
            <person name="Thierry A."/>
            <person name="Tobiasch E."/>
            <person name="Tzermia M."/>
            <person name="Uhlen M."/>
            <person name="Unseld M."/>
            <person name="Valens M."/>
            <person name="Vandenbol M."/>
            <person name="Vetter I."/>
            <person name="Vlcek C."/>
            <person name="Voet M."/>
            <person name="Volckaert G."/>
            <person name="Voss H."/>
            <person name="Wambutt R."/>
            <person name="Wedler H."/>
            <person name="Wiemann S."/>
            <person name="Winsor B."/>
            <person name="Wolfe K.H."/>
            <person name="Zollner A."/>
            <person name="Zumstein E."/>
            <person name="Kleine K."/>
        </authorList>
    </citation>
    <scope>NUCLEOTIDE SEQUENCE [LARGE SCALE GENOMIC DNA]</scope>
    <source>
        <strain>ATCC 204508 / S288c</strain>
    </source>
</reference>
<reference key="6">
    <citation type="journal article" date="2014" name="G3 (Bethesda)">
        <title>The reference genome sequence of Saccharomyces cerevisiae: Then and now.</title>
        <authorList>
            <person name="Engel S.R."/>
            <person name="Dietrich F.S."/>
            <person name="Fisk D.G."/>
            <person name="Binkley G."/>
            <person name="Balakrishnan R."/>
            <person name="Costanzo M.C."/>
            <person name="Dwight S.S."/>
            <person name="Hitz B.C."/>
            <person name="Karra K."/>
            <person name="Nash R.S."/>
            <person name="Weng S."/>
            <person name="Wong E.D."/>
            <person name="Lloyd P."/>
            <person name="Skrzypek M.S."/>
            <person name="Miyasato S.R."/>
            <person name="Simison M."/>
            <person name="Cherry J.M."/>
        </authorList>
    </citation>
    <scope>GENOME REANNOTATION</scope>
    <source>
        <strain>ATCC 204508 / S288c</strain>
    </source>
</reference>
<reference key="7">
    <citation type="journal article" date="1997" name="Yeast">
        <title>Sequence and analysis of a 36.2 kb fragment from the right arm of yeast chromosome XV reveals 19 open reading frames including SNF2 (5' end), CPA1, SLY41, a putative transport ATPase, a putative ribosomal protein and an SNF2 homologue.</title>
        <authorList>
            <person name="Poirey R."/>
            <person name="Cziepluch C."/>
            <person name="Tobiasch E."/>
            <person name="Pujol A."/>
            <person name="Kordes E."/>
            <person name="Jauniaux J.-C."/>
        </authorList>
    </citation>
    <scope>NUCLEOTIDE SEQUENCE [GENOMIC DNA] OF 1-309</scope>
    <source>
        <strain>ATCC 96604 / S288c / FY1679</strain>
    </source>
</reference>
<reference key="8">
    <citation type="journal article" date="1996" name="Nucleic Acids Res.">
        <title>Functional analysis of the DNA-stimulated ATPase domain of yeast SWI2/SNF2.</title>
        <authorList>
            <person name="Richmond E."/>
            <person name="Peterson C.L."/>
        </authorList>
    </citation>
    <scope>MUTAGENESIS</scope>
</reference>
<reference key="9">
    <citation type="journal article" date="2003" name="Nature">
        <title>Global analysis of protein expression in yeast.</title>
        <authorList>
            <person name="Ghaemmaghami S."/>
            <person name="Huh W.-K."/>
            <person name="Bower K."/>
            <person name="Howson R.W."/>
            <person name="Belle A."/>
            <person name="Dephoure N."/>
            <person name="O'Shea E.K."/>
            <person name="Weissman J.S."/>
        </authorList>
    </citation>
    <scope>LEVEL OF PROTEIN EXPRESSION [LARGE SCALE ANALYSIS]</scope>
</reference>
<reference key="10">
    <citation type="journal article" date="2007" name="J. Proteome Res.">
        <title>Large-scale phosphorylation analysis of alpha-factor-arrested Saccharomyces cerevisiae.</title>
        <authorList>
            <person name="Li X."/>
            <person name="Gerber S.A."/>
            <person name="Rudner A.D."/>
            <person name="Beausoleil S.A."/>
            <person name="Haas W."/>
            <person name="Villen J."/>
            <person name="Elias J.E."/>
            <person name="Gygi S.P."/>
        </authorList>
    </citation>
    <scope>PHOSPHORYLATION [LARGE SCALE ANALYSIS] AT SER-358</scope>
    <scope>IDENTIFICATION BY MASS SPECTROMETRY [LARGE SCALE ANALYSIS]</scope>
    <source>
        <strain>ADR376</strain>
    </source>
</reference>
<reference key="11">
    <citation type="journal article" date="2008" name="Mol. Cell. Proteomics">
        <title>A multidimensional chromatography technology for in-depth phosphoproteome analysis.</title>
        <authorList>
            <person name="Albuquerque C.P."/>
            <person name="Smolka M.B."/>
            <person name="Payne S.H."/>
            <person name="Bafna V."/>
            <person name="Eng J."/>
            <person name="Zhou H."/>
        </authorList>
    </citation>
    <scope>PHOSPHORYLATION [LARGE SCALE ANALYSIS] AT SER-358; SER-716 AND SER-1340</scope>
    <scope>IDENTIFICATION BY MASS SPECTROMETRY [LARGE SCALE ANALYSIS]</scope>
</reference>
<reference key="12">
    <citation type="journal article" date="2009" name="Science">
        <title>Global analysis of Cdk1 substrate phosphorylation sites provides insights into evolution.</title>
        <authorList>
            <person name="Holt L.J."/>
            <person name="Tuch B.B."/>
            <person name="Villen J."/>
            <person name="Johnson A.D."/>
            <person name="Gygi S.P."/>
            <person name="Morgan D.O."/>
        </authorList>
    </citation>
    <scope>PHOSPHORYLATION [LARGE SCALE ANALYSIS] AT SER-358; THR-383 AND SER-716</scope>
    <scope>IDENTIFICATION BY MASS SPECTROMETRY [LARGE SCALE ANALYSIS]</scope>
</reference>
<reference key="13">
    <citation type="journal article" date="2012" name="Proteomics">
        <title>Sites of ubiquitin attachment in Saccharomyces cerevisiae.</title>
        <authorList>
            <person name="Starita L.M."/>
            <person name="Lo R.S."/>
            <person name="Eng J.K."/>
            <person name="von Haller P.D."/>
            <person name="Fields S."/>
        </authorList>
    </citation>
    <scope>UBIQUITINATION [LARGE SCALE ANALYSIS] AT LYS-543</scope>
    <scope>IDENTIFICATION BY MASS SPECTROMETRY [LARGE SCALE ANALYSIS]</scope>
</reference>
<reference key="14">
    <citation type="journal article" date="2003" name="Nat. Struct. Biol.">
        <title>Structural analysis of the yeast SWI/SNF chromatin remodeling complex.</title>
        <authorList>
            <person name="Smith C.L."/>
            <person name="Horowitz-Scherer R."/>
            <person name="Flanagan J.F."/>
            <person name="Woodcock C.L."/>
            <person name="Peterson C.L."/>
        </authorList>
    </citation>
    <scope>3D-STRUCTURE MODELING OF THE SWI/SNF COMPLEX</scope>
    <scope>ELECTRON MICROSCOPY OF THE SWI/SNF COMPLEX</scope>
</reference>
<keyword id="KW-0002">3D-structure</keyword>
<keyword id="KW-0010">Activator</keyword>
<keyword id="KW-0067">ATP-binding</keyword>
<keyword id="KW-0103">Bromodomain</keyword>
<keyword id="KW-0347">Helicase</keyword>
<keyword id="KW-0378">Hydrolase</keyword>
<keyword id="KW-1017">Isopeptide bond</keyword>
<keyword id="KW-0547">Nucleotide-binding</keyword>
<keyword id="KW-0539">Nucleus</keyword>
<keyword id="KW-0597">Phosphoprotein</keyword>
<keyword id="KW-1185">Reference proteome</keyword>
<keyword id="KW-0677">Repeat</keyword>
<keyword id="KW-0804">Transcription</keyword>
<keyword id="KW-0805">Transcription regulation</keyword>
<keyword id="KW-0832">Ubl conjugation</keyword>
<organism>
    <name type="scientific">Saccharomyces cerevisiae (strain ATCC 204508 / S288c)</name>
    <name type="common">Baker's yeast</name>
    <dbReference type="NCBI Taxonomy" id="559292"/>
    <lineage>
        <taxon>Eukaryota</taxon>
        <taxon>Fungi</taxon>
        <taxon>Dikarya</taxon>
        <taxon>Ascomycota</taxon>
        <taxon>Saccharomycotina</taxon>
        <taxon>Saccharomycetes</taxon>
        <taxon>Saccharomycetales</taxon>
        <taxon>Saccharomycetaceae</taxon>
        <taxon>Saccharomyces</taxon>
    </lineage>
</organism>
<dbReference type="EC" id="3.6.4.-"/>
<dbReference type="EMBL" id="M61703">
    <property type="protein sequence ID" value="AAA35059.1"/>
    <property type="molecule type" value="Genomic_DNA"/>
</dbReference>
<dbReference type="EMBL" id="X57837">
    <property type="protein sequence ID" value="CAA40969.1"/>
    <property type="molecule type" value="Genomic_DNA"/>
</dbReference>
<dbReference type="EMBL" id="D90459">
    <property type="protein sequence ID" value="BAA14423.1"/>
    <property type="molecule type" value="Genomic_DNA"/>
</dbReference>
<dbReference type="EMBL" id="X89633">
    <property type="protein sequence ID" value="CAA61793.1"/>
    <property type="molecule type" value="Genomic_DNA"/>
</dbReference>
<dbReference type="EMBL" id="Z75198">
    <property type="protein sequence ID" value="CAA99517.1"/>
    <property type="molecule type" value="Genomic_DNA"/>
</dbReference>
<dbReference type="EMBL" id="Z75199">
    <property type="protein sequence ID" value="CAA99519.1"/>
    <property type="molecule type" value="Genomic_DNA"/>
</dbReference>
<dbReference type="EMBL" id="BK006948">
    <property type="protein sequence ID" value="DAA11054.1"/>
    <property type="molecule type" value="Genomic_DNA"/>
</dbReference>
<dbReference type="PIR" id="S15047">
    <property type="entry name" value="S15047"/>
</dbReference>
<dbReference type="RefSeq" id="NP_014933.3">
    <property type="nucleotide sequence ID" value="NM_001183709.3"/>
</dbReference>
<dbReference type="PDB" id="4I6M">
    <property type="method" value="X-ray"/>
    <property type="resolution" value="2.80 A"/>
    <property type="chains" value="C=575-667"/>
</dbReference>
<dbReference type="PDB" id="5X0X">
    <property type="method" value="EM"/>
    <property type="resolution" value="3.97 A"/>
    <property type="chains" value="O=666-1400"/>
</dbReference>
<dbReference type="PDB" id="5X0Y">
    <property type="method" value="EM"/>
    <property type="resolution" value="3.97 A"/>
    <property type="chains" value="O=666-1400"/>
</dbReference>
<dbReference type="PDB" id="5Z3L">
    <property type="method" value="EM"/>
    <property type="resolution" value="4.31 A"/>
    <property type="chains" value="O=666-1400"/>
</dbReference>
<dbReference type="PDB" id="5Z3O">
    <property type="method" value="EM"/>
    <property type="resolution" value="3.62 A"/>
    <property type="chains" value="O=666-1400"/>
</dbReference>
<dbReference type="PDB" id="5Z3U">
    <property type="method" value="EM"/>
    <property type="resolution" value="4.31 A"/>
    <property type="chains" value="O=666-1400"/>
</dbReference>
<dbReference type="PDB" id="5Z3V">
    <property type="method" value="EM"/>
    <property type="resolution" value="4.22 A"/>
    <property type="chains" value="O=666-1400"/>
</dbReference>
<dbReference type="PDB" id="6IY2">
    <property type="method" value="EM"/>
    <property type="resolution" value="3.47 A"/>
    <property type="chains" value="O=670-1348"/>
</dbReference>
<dbReference type="PDB" id="6IY3">
    <property type="method" value="EM"/>
    <property type="resolution" value="3.67 A"/>
    <property type="chains" value="O=670-1348"/>
</dbReference>
<dbReference type="PDB" id="6UXV">
    <property type="method" value="EM"/>
    <property type="resolution" value="4.70 A"/>
    <property type="chains" value="A=1-1703"/>
</dbReference>
<dbReference type="PDB" id="6UXW">
    <property type="method" value="EM"/>
    <property type="resolution" value="8.96 A"/>
    <property type="chains" value="A=1-1703"/>
</dbReference>
<dbReference type="PDB" id="7C4J">
    <property type="method" value="EM"/>
    <property type="resolution" value="2.89 A"/>
    <property type="chains" value="H=1-1703"/>
</dbReference>
<dbReference type="PDB" id="7EGM">
    <property type="method" value="EM"/>
    <property type="resolution" value="3.60 A"/>
    <property type="chains" value="A=430-1400"/>
</dbReference>
<dbReference type="PDB" id="7EGP">
    <property type="method" value="EM"/>
    <property type="resolution" value="6.90 A"/>
    <property type="chains" value="A=430-1400"/>
</dbReference>
<dbReference type="PDB" id="7VRC">
    <property type="method" value="X-ray"/>
    <property type="resolution" value="2.15 A"/>
    <property type="chains" value="B/D=248-308"/>
</dbReference>
<dbReference type="PDBsum" id="4I6M"/>
<dbReference type="PDBsum" id="5X0X"/>
<dbReference type="PDBsum" id="5X0Y"/>
<dbReference type="PDBsum" id="5Z3L"/>
<dbReference type="PDBsum" id="5Z3O"/>
<dbReference type="PDBsum" id="5Z3U"/>
<dbReference type="PDBsum" id="5Z3V"/>
<dbReference type="PDBsum" id="6IY2"/>
<dbReference type="PDBsum" id="6IY3"/>
<dbReference type="PDBsum" id="6UXV"/>
<dbReference type="PDBsum" id="6UXW"/>
<dbReference type="PDBsum" id="7C4J"/>
<dbReference type="PDBsum" id="7EGM"/>
<dbReference type="PDBsum" id="7EGP"/>
<dbReference type="PDBsum" id="7VRC"/>
<dbReference type="EMDB" id="EMD-20933"/>
<dbReference type="EMDB" id="EMD-20934"/>
<dbReference type="EMDB" id="EMD-30285"/>
<dbReference type="EMDB" id="EMD-31136"/>
<dbReference type="EMDB" id="EMD-31137"/>
<dbReference type="EMDB" id="EMD-6699"/>
<dbReference type="EMDB" id="EMD-6700"/>
<dbReference type="EMDB" id="EMD-6879"/>
<dbReference type="EMDB" id="EMD-6880"/>
<dbReference type="EMDB" id="EMD-6882"/>
<dbReference type="EMDB" id="EMD-6883"/>
<dbReference type="EMDB" id="EMD-9748"/>
<dbReference type="SMR" id="P22082"/>
<dbReference type="BioGRID" id="34678">
    <property type="interactions" value="267"/>
</dbReference>
<dbReference type="ComplexPortal" id="CPX-1150">
    <property type="entry name" value="SWI/SNF chromatin remodelling complex"/>
</dbReference>
<dbReference type="DIP" id="DIP-1150N"/>
<dbReference type="FunCoup" id="P22082">
    <property type="interactions" value="2638"/>
</dbReference>
<dbReference type="IntAct" id="P22082">
    <property type="interactions" value="48"/>
</dbReference>
<dbReference type="MINT" id="P22082"/>
<dbReference type="STRING" id="4932.YOR290C"/>
<dbReference type="GlyGen" id="P22082">
    <property type="glycosylation" value="3 sites, 1 O-linked glycan (2 sites)"/>
</dbReference>
<dbReference type="iPTMnet" id="P22082"/>
<dbReference type="PaxDb" id="4932-YOR290C"/>
<dbReference type="PeptideAtlas" id="P22082"/>
<dbReference type="EnsemblFungi" id="YOR290C_mRNA">
    <property type="protein sequence ID" value="YOR290C"/>
    <property type="gene ID" value="YOR290C"/>
</dbReference>
<dbReference type="GeneID" id="854465"/>
<dbReference type="KEGG" id="sce:YOR290C"/>
<dbReference type="AGR" id="SGD:S000005816"/>
<dbReference type="SGD" id="S000005816">
    <property type="gene designation" value="SNF2"/>
</dbReference>
<dbReference type="VEuPathDB" id="FungiDB:YOR290C"/>
<dbReference type="eggNOG" id="KOG0386">
    <property type="taxonomic scope" value="Eukaryota"/>
</dbReference>
<dbReference type="GeneTree" id="ENSGT00940000169728"/>
<dbReference type="HOGENOM" id="CLU_000315_15_2_1"/>
<dbReference type="InParanoid" id="P22082"/>
<dbReference type="OMA" id="NPTRETN"/>
<dbReference type="OrthoDB" id="5857104at2759"/>
<dbReference type="BioCyc" id="YEAST:G3O-33775-MONOMER"/>
<dbReference type="BioGRID-ORCS" id="854465">
    <property type="hits" value="2 hits in 10 CRISPR screens"/>
</dbReference>
<dbReference type="EvolutionaryTrace" id="P22082"/>
<dbReference type="PRO" id="PR:P22082"/>
<dbReference type="Proteomes" id="UP000002311">
    <property type="component" value="Chromosome XV"/>
</dbReference>
<dbReference type="RNAct" id="P22082">
    <property type="molecule type" value="protein"/>
</dbReference>
<dbReference type="GO" id="GO:0000785">
    <property type="term" value="C:chromatin"/>
    <property type="evidence" value="ECO:0000318"/>
    <property type="project" value="GO_Central"/>
</dbReference>
<dbReference type="GO" id="GO:0005634">
    <property type="term" value="C:nucleus"/>
    <property type="evidence" value="ECO:0000314"/>
    <property type="project" value="SGD"/>
</dbReference>
<dbReference type="GO" id="GO:0016514">
    <property type="term" value="C:SWI/SNF complex"/>
    <property type="evidence" value="ECO:0000314"/>
    <property type="project" value="SGD"/>
</dbReference>
<dbReference type="GO" id="GO:0005524">
    <property type="term" value="F:ATP binding"/>
    <property type="evidence" value="ECO:0007669"/>
    <property type="project" value="UniProtKB-KW"/>
</dbReference>
<dbReference type="GO" id="GO:0140658">
    <property type="term" value="F:ATP-dependent chromatin remodeler activity"/>
    <property type="evidence" value="ECO:0000314"/>
    <property type="project" value="SGD"/>
</dbReference>
<dbReference type="GO" id="GO:0003682">
    <property type="term" value="F:chromatin binding"/>
    <property type="evidence" value="ECO:0000318"/>
    <property type="project" value="GO_Central"/>
</dbReference>
<dbReference type="GO" id="GO:0003677">
    <property type="term" value="F:DNA binding"/>
    <property type="evidence" value="ECO:0000318"/>
    <property type="project" value="GO_Central"/>
</dbReference>
<dbReference type="GO" id="GO:0004386">
    <property type="term" value="F:helicase activity"/>
    <property type="evidence" value="ECO:0007669"/>
    <property type="project" value="UniProtKB-KW"/>
</dbReference>
<dbReference type="GO" id="GO:0140008">
    <property type="term" value="F:histone H4 reader activity"/>
    <property type="evidence" value="ECO:0000314"/>
    <property type="project" value="GO_Central"/>
</dbReference>
<dbReference type="GO" id="GO:0140566">
    <property type="term" value="F:histone reader activity"/>
    <property type="evidence" value="ECO:0000314"/>
    <property type="project" value="GO_Central"/>
</dbReference>
<dbReference type="GO" id="GO:0016787">
    <property type="term" value="F:hydrolase activity"/>
    <property type="evidence" value="ECO:0007669"/>
    <property type="project" value="UniProtKB-KW"/>
</dbReference>
<dbReference type="GO" id="GO:0070577">
    <property type="term" value="F:lysine-acetylated histone binding"/>
    <property type="evidence" value="ECO:0000314"/>
    <property type="project" value="SGD"/>
</dbReference>
<dbReference type="GO" id="GO:0031492">
    <property type="term" value="F:nucleosomal DNA binding"/>
    <property type="evidence" value="ECO:0000314"/>
    <property type="project" value="SGD"/>
</dbReference>
<dbReference type="GO" id="GO:0140750">
    <property type="term" value="F:nucleosome array spacer activity"/>
    <property type="evidence" value="ECO:0000318"/>
    <property type="project" value="GO_Central"/>
</dbReference>
<dbReference type="GO" id="GO:0000182">
    <property type="term" value="F:rDNA binding"/>
    <property type="evidence" value="ECO:0000314"/>
    <property type="project" value="SGD"/>
</dbReference>
<dbReference type="GO" id="GO:0061629">
    <property type="term" value="F:RNA polymerase II-specific DNA-binding transcription factor binding"/>
    <property type="evidence" value="ECO:0000353"/>
    <property type="project" value="SGD"/>
</dbReference>
<dbReference type="GO" id="GO:0035973">
    <property type="term" value="P:aggrephagy"/>
    <property type="evidence" value="ECO:0000315"/>
    <property type="project" value="SGD"/>
</dbReference>
<dbReference type="GO" id="GO:0034198">
    <property type="term" value="P:cellular response to amino acid starvation"/>
    <property type="evidence" value="ECO:0000315"/>
    <property type="project" value="SGD"/>
</dbReference>
<dbReference type="GO" id="GO:0006338">
    <property type="term" value="P:chromatin remodeling"/>
    <property type="evidence" value="ECO:0000314"/>
    <property type="project" value="ComplexPortal"/>
</dbReference>
<dbReference type="GO" id="GO:0042148">
    <property type="term" value="P:DNA strand invasion"/>
    <property type="evidence" value="ECO:0000315"/>
    <property type="project" value="SGD"/>
</dbReference>
<dbReference type="GO" id="GO:0006261">
    <property type="term" value="P:DNA-templated DNA replication"/>
    <property type="evidence" value="ECO:0000315"/>
    <property type="project" value="SGD"/>
</dbReference>
<dbReference type="GO" id="GO:0006302">
    <property type="term" value="P:double-strand break repair"/>
    <property type="evidence" value="ECO:0000315"/>
    <property type="project" value="SGD"/>
</dbReference>
<dbReference type="GO" id="GO:1900189">
    <property type="term" value="P:positive regulation of cell adhesion involved in single-species biofilm formation"/>
    <property type="evidence" value="ECO:0000315"/>
    <property type="project" value="SGD"/>
</dbReference>
<dbReference type="GO" id="GO:2000219">
    <property type="term" value="P:positive regulation of invasive growth in response to glucose limitation"/>
    <property type="evidence" value="ECO:0000315"/>
    <property type="project" value="SGD"/>
</dbReference>
<dbReference type="GO" id="GO:0031496">
    <property type="term" value="P:positive regulation of mating type switching"/>
    <property type="evidence" value="ECO:0000315"/>
    <property type="project" value="SGD"/>
</dbReference>
<dbReference type="GO" id="GO:0045944">
    <property type="term" value="P:positive regulation of transcription by RNA polymerase II"/>
    <property type="evidence" value="ECO:0000315"/>
    <property type="project" value="SGD"/>
</dbReference>
<dbReference type="GO" id="GO:0006357">
    <property type="term" value="P:regulation of transcription by RNA polymerase II"/>
    <property type="evidence" value="ECO:0000314"/>
    <property type="project" value="ComplexPortal"/>
</dbReference>
<dbReference type="GO" id="GO:0045815">
    <property type="term" value="P:transcription initiation-coupled chromatin remodeling"/>
    <property type="evidence" value="ECO:0000315"/>
    <property type="project" value="GO_Central"/>
</dbReference>
<dbReference type="CDD" id="cd05519">
    <property type="entry name" value="Bromo_SNF2"/>
    <property type="match status" value="1"/>
</dbReference>
<dbReference type="CDD" id="cd17996">
    <property type="entry name" value="DEXHc_SMARCA2_SMARCA4"/>
    <property type="match status" value="1"/>
</dbReference>
<dbReference type="CDD" id="cd18793">
    <property type="entry name" value="SF2_C_SNF"/>
    <property type="match status" value="1"/>
</dbReference>
<dbReference type="FunFam" id="3.40.50.10810:FF:000008">
    <property type="entry name" value="Chromatin structure-remodeling complex subunit snf21"/>
    <property type="match status" value="1"/>
</dbReference>
<dbReference type="FunFam" id="3.40.50.300:FF:000843">
    <property type="entry name" value="Chromatin structure-remodeling complex subunit snf21"/>
    <property type="match status" value="1"/>
</dbReference>
<dbReference type="FunFam" id="1.20.5.170:FF:000116">
    <property type="entry name" value="Transcription regulatory protein SNF2"/>
    <property type="match status" value="1"/>
</dbReference>
<dbReference type="FunFam" id="1.20.920.10:FF:000065">
    <property type="entry name" value="Transcription regulatory protein SNF2"/>
    <property type="match status" value="1"/>
</dbReference>
<dbReference type="Gene3D" id="1.20.5.170">
    <property type="match status" value="1"/>
</dbReference>
<dbReference type="Gene3D" id="1.20.920.10">
    <property type="entry name" value="Bromodomain-like"/>
    <property type="match status" value="1"/>
</dbReference>
<dbReference type="Gene3D" id="3.40.50.300">
    <property type="entry name" value="P-loop containing nucleotide triphosphate hydrolases"/>
    <property type="match status" value="1"/>
</dbReference>
<dbReference type="Gene3D" id="3.40.50.10810">
    <property type="entry name" value="Tandem AAA-ATPase domain"/>
    <property type="match status" value="1"/>
</dbReference>
<dbReference type="InterPro" id="IPR017956">
    <property type="entry name" value="AT_hook_DNA-bd_motif"/>
</dbReference>
<dbReference type="InterPro" id="IPR001487">
    <property type="entry name" value="Bromodomain"/>
</dbReference>
<dbReference type="InterPro" id="IPR036427">
    <property type="entry name" value="Bromodomain-like_sf"/>
</dbReference>
<dbReference type="InterPro" id="IPR018359">
    <property type="entry name" value="Bromodomain_CS"/>
</dbReference>
<dbReference type="InterPro" id="IPR014978">
    <property type="entry name" value="Gln-Leu-Gln_QLQ"/>
</dbReference>
<dbReference type="InterPro" id="IPR014001">
    <property type="entry name" value="Helicase_ATP-bd"/>
</dbReference>
<dbReference type="InterPro" id="IPR001650">
    <property type="entry name" value="Helicase_C-like"/>
</dbReference>
<dbReference type="InterPro" id="IPR014012">
    <property type="entry name" value="HSA_dom"/>
</dbReference>
<dbReference type="InterPro" id="IPR027417">
    <property type="entry name" value="P-loop_NTPase"/>
</dbReference>
<dbReference type="InterPro" id="IPR029295">
    <property type="entry name" value="SnAC"/>
</dbReference>
<dbReference type="InterPro" id="IPR038718">
    <property type="entry name" value="SNF2-like_sf"/>
</dbReference>
<dbReference type="InterPro" id="IPR049730">
    <property type="entry name" value="SNF2/RAD54-like_C"/>
</dbReference>
<dbReference type="InterPro" id="IPR000330">
    <property type="entry name" value="SNF2_N"/>
</dbReference>
<dbReference type="PANTHER" id="PTHR10799">
    <property type="entry name" value="SNF2/RAD54 HELICASE FAMILY"/>
    <property type="match status" value="1"/>
</dbReference>
<dbReference type="Pfam" id="PF00439">
    <property type="entry name" value="Bromodomain"/>
    <property type="match status" value="1"/>
</dbReference>
<dbReference type="Pfam" id="PF00271">
    <property type="entry name" value="Helicase_C"/>
    <property type="match status" value="1"/>
</dbReference>
<dbReference type="Pfam" id="PF08880">
    <property type="entry name" value="QLQ"/>
    <property type="match status" value="1"/>
</dbReference>
<dbReference type="Pfam" id="PF14619">
    <property type="entry name" value="SnAC"/>
    <property type="match status" value="1"/>
</dbReference>
<dbReference type="Pfam" id="PF00176">
    <property type="entry name" value="SNF2-rel_dom"/>
    <property type="match status" value="1"/>
</dbReference>
<dbReference type="PRINTS" id="PR00503">
    <property type="entry name" value="BROMODOMAIN"/>
</dbReference>
<dbReference type="SMART" id="SM00384">
    <property type="entry name" value="AT_hook"/>
    <property type="match status" value="2"/>
</dbReference>
<dbReference type="SMART" id="SM00297">
    <property type="entry name" value="BROMO"/>
    <property type="match status" value="1"/>
</dbReference>
<dbReference type="SMART" id="SM00487">
    <property type="entry name" value="DEXDc"/>
    <property type="match status" value="1"/>
</dbReference>
<dbReference type="SMART" id="SM00490">
    <property type="entry name" value="HELICc"/>
    <property type="match status" value="1"/>
</dbReference>
<dbReference type="SMART" id="SM00951">
    <property type="entry name" value="QLQ"/>
    <property type="match status" value="1"/>
</dbReference>
<dbReference type="SMART" id="SM01314">
    <property type="entry name" value="SnAC"/>
    <property type="match status" value="1"/>
</dbReference>
<dbReference type="SUPFAM" id="SSF47370">
    <property type="entry name" value="Bromodomain"/>
    <property type="match status" value="1"/>
</dbReference>
<dbReference type="SUPFAM" id="SSF52540">
    <property type="entry name" value="P-loop containing nucleoside triphosphate hydrolases"/>
    <property type="match status" value="2"/>
</dbReference>
<dbReference type="PROSITE" id="PS00633">
    <property type="entry name" value="BROMODOMAIN_1"/>
    <property type="match status" value="1"/>
</dbReference>
<dbReference type="PROSITE" id="PS50014">
    <property type="entry name" value="BROMODOMAIN_2"/>
    <property type="match status" value="1"/>
</dbReference>
<dbReference type="PROSITE" id="PS51192">
    <property type="entry name" value="HELICASE_ATP_BIND_1"/>
    <property type="match status" value="1"/>
</dbReference>
<dbReference type="PROSITE" id="PS51194">
    <property type="entry name" value="HELICASE_CTER"/>
    <property type="match status" value="1"/>
</dbReference>
<dbReference type="PROSITE" id="PS51204">
    <property type="entry name" value="HSA"/>
    <property type="match status" value="1"/>
</dbReference>
<dbReference type="PROSITE" id="PS51666">
    <property type="entry name" value="QLQ"/>
    <property type="match status" value="1"/>
</dbReference>